<organism>
    <name type="scientific">Arabidopsis thaliana</name>
    <name type="common">Mouse-ear cress</name>
    <dbReference type="NCBI Taxonomy" id="3702"/>
    <lineage>
        <taxon>Eukaryota</taxon>
        <taxon>Viridiplantae</taxon>
        <taxon>Streptophyta</taxon>
        <taxon>Embryophyta</taxon>
        <taxon>Tracheophyta</taxon>
        <taxon>Spermatophyta</taxon>
        <taxon>Magnoliopsida</taxon>
        <taxon>eudicotyledons</taxon>
        <taxon>Gunneridae</taxon>
        <taxon>Pentapetalae</taxon>
        <taxon>rosids</taxon>
        <taxon>malvids</taxon>
        <taxon>Brassicales</taxon>
        <taxon>Brassicaceae</taxon>
        <taxon>Camelineae</taxon>
        <taxon>Arabidopsis</taxon>
    </lineage>
</organism>
<name>WTR35_ARATH</name>
<reference key="1">
    <citation type="journal article" date="1999" name="Nature">
        <title>Sequence and analysis of chromosome 4 of the plant Arabidopsis thaliana.</title>
        <authorList>
            <person name="Mayer K.F.X."/>
            <person name="Schueller C."/>
            <person name="Wambutt R."/>
            <person name="Murphy G."/>
            <person name="Volckaert G."/>
            <person name="Pohl T."/>
            <person name="Duesterhoeft A."/>
            <person name="Stiekema W."/>
            <person name="Entian K.-D."/>
            <person name="Terryn N."/>
            <person name="Harris B."/>
            <person name="Ansorge W."/>
            <person name="Brandt P."/>
            <person name="Grivell L.A."/>
            <person name="Rieger M."/>
            <person name="Weichselgartner M."/>
            <person name="de Simone V."/>
            <person name="Obermaier B."/>
            <person name="Mache R."/>
            <person name="Mueller M."/>
            <person name="Kreis M."/>
            <person name="Delseny M."/>
            <person name="Puigdomenech P."/>
            <person name="Watson M."/>
            <person name="Schmidtheini T."/>
            <person name="Reichert B."/>
            <person name="Portetelle D."/>
            <person name="Perez-Alonso M."/>
            <person name="Boutry M."/>
            <person name="Bancroft I."/>
            <person name="Vos P."/>
            <person name="Hoheisel J."/>
            <person name="Zimmermann W."/>
            <person name="Wedler H."/>
            <person name="Ridley P."/>
            <person name="Langham S.-A."/>
            <person name="McCullagh B."/>
            <person name="Bilham L."/>
            <person name="Robben J."/>
            <person name="van der Schueren J."/>
            <person name="Grymonprez B."/>
            <person name="Chuang Y.-J."/>
            <person name="Vandenbussche F."/>
            <person name="Braeken M."/>
            <person name="Weltjens I."/>
            <person name="Voet M."/>
            <person name="Bastiaens I."/>
            <person name="Aert R."/>
            <person name="Defoor E."/>
            <person name="Weitzenegger T."/>
            <person name="Bothe G."/>
            <person name="Ramsperger U."/>
            <person name="Hilbert H."/>
            <person name="Braun M."/>
            <person name="Holzer E."/>
            <person name="Brandt A."/>
            <person name="Peters S."/>
            <person name="van Staveren M."/>
            <person name="Dirkse W."/>
            <person name="Mooijman P."/>
            <person name="Klein Lankhorst R."/>
            <person name="Rose M."/>
            <person name="Hauf J."/>
            <person name="Koetter P."/>
            <person name="Berneiser S."/>
            <person name="Hempel S."/>
            <person name="Feldpausch M."/>
            <person name="Lamberth S."/>
            <person name="Van den Daele H."/>
            <person name="De Keyser A."/>
            <person name="Buysshaert C."/>
            <person name="Gielen J."/>
            <person name="Villarroel R."/>
            <person name="De Clercq R."/>
            <person name="van Montagu M."/>
            <person name="Rogers J."/>
            <person name="Cronin A."/>
            <person name="Quail M.A."/>
            <person name="Bray-Allen S."/>
            <person name="Clark L."/>
            <person name="Doggett J."/>
            <person name="Hall S."/>
            <person name="Kay M."/>
            <person name="Lennard N."/>
            <person name="McLay K."/>
            <person name="Mayes R."/>
            <person name="Pettett A."/>
            <person name="Rajandream M.A."/>
            <person name="Lyne M."/>
            <person name="Benes V."/>
            <person name="Rechmann S."/>
            <person name="Borkova D."/>
            <person name="Bloecker H."/>
            <person name="Scharfe M."/>
            <person name="Grimm M."/>
            <person name="Loehnert T.-H."/>
            <person name="Dose S."/>
            <person name="de Haan M."/>
            <person name="Maarse A.C."/>
            <person name="Schaefer M."/>
            <person name="Mueller-Auer S."/>
            <person name="Gabel C."/>
            <person name="Fuchs M."/>
            <person name="Fartmann B."/>
            <person name="Granderath K."/>
            <person name="Dauner D."/>
            <person name="Herzl A."/>
            <person name="Neumann S."/>
            <person name="Argiriou A."/>
            <person name="Vitale D."/>
            <person name="Liguori R."/>
            <person name="Piravandi E."/>
            <person name="Massenet O."/>
            <person name="Quigley F."/>
            <person name="Clabauld G."/>
            <person name="Muendlein A."/>
            <person name="Felber R."/>
            <person name="Schnabl S."/>
            <person name="Hiller R."/>
            <person name="Schmidt W."/>
            <person name="Lecharny A."/>
            <person name="Aubourg S."/>
            <person name="Chefdor F."/>
            <person name="Cooke R."/>
            <person name="Berger C."/>
            <person name="Monfort A."/>
            <person name="Casacuberta E."/>
            <person name="Gibbons T."/>
            <person name="Weber N."/>
            <person name="Vandenbol M."/>
            <person name="Bargues M."/>
            <person name="Terol J."/>
            <person name="Torres A."/>
            <person name="Perez-Perez A."/>
            <person name="Purnelle B."/>
            <person name="Bent E."/>
            <person name="Johnson S."/>
            <person name="Tacon D."/>
            <person name="Jesse T."/>
            <person name="Heijnen L."/>
            <person name="Schwarz S."/>
            <person name="Scholler P."/>
            <person name="Heber S."/>
            <person name="Francs P."/>
            <person name="Bielke C."/>
            <person name="Frishman D."/>
            <person name="Haase D."/>
            <person name="Lemcke K."/>
            <person name="Mewes H.-W."/>
            <person name="Stocker S."/>
            <person name="Zaccaria P."/>
            <person name="Bevan M."/>
            <person name="Wilson R.K."/>
            <person name="de la Bastide M."/>
            <person name="Habermann K."/>
            <person name="Parnell L."/>
            <person name="Dedhia N."/>
            <person name="Gnoj L."/>
            <person name="Schutz K."/>
            <person name="Huang E."/>
            <person name="Spiegel L."/>
            <person name="Sekhon M."/>
            <person name="Murray J."/>
            <person name="Sheet P."/>
            <person name="Cordes M."/>
            <person name="Abu-Threideh J."/>
            <person name="Stoneking T."/>
            <person name="Kalicki J."/>
            <person name="Graves T."/>
            <person name="Harmon G."/>
            <person name="Edwards J."/>
            <person name="Latreille P."/>
            <person name="Courtney L."/>
            <person name="Cloud J."/>
            <person name="Abbott A."/>
            <person name="Scott K."/>
            <person name="Johnson D."/>
            <person name="Minx P."/>
            <person name="Bentley D."/>
            <person name="Fulton B."/>
            <person name="Miller N."/>
            <person name="Greco T."/>
            <person name="Kemp K."/>
            <person name="Kramer J."/>
            <person name="Fulton L."/>
            <person name="Mardis E."/>
            <person name="Dante M."/>
            <person name="Pepin K."/>
            <person name="Hillier L.W."/>
            <person name="Nelson J."/>
            <person name="Spieth J."/>
            <person name="Ryan E."/>
            <person name="Andrews S."/>
            <person name="Geisel C."/>
            <person name="Layman D."/>
            <person name="Du H."/>
            <person name="Ali J."/>
            <person name="Berghoff A."/>
            <person name="Jones K."/>
            <person name="Drone K."/>
            <person name="Cotton M."/>
            <person name="Joshu C."/>
            <person name="Antonoiu B."/>
            <person name="Zidanic M."/>
            <person name="Strong C."/>
            <person name="Sun H."/>
            <person name="Lamar B."/>
            <person name="Yordan C."/>
            <person name="Ma P."/>
            <person name="Zhong J."/>
            <person name="Preston R."/>
            <person name="Vil D."/>
            <person name="Shekher M."/>
            <person name="Matero A."/>
            <person name="Shah R."/>
            <person name="Swaby I.K."/>
            <person name="O'Shaughnessy A."/>
            <person name="Rodriguez M."/>
            <person name="Hoffman J."/>
            <person name="Till S."/>
            <person name="Granat S."/>
            <person name="Shohdy N."/>
            <person name="Hasegawa A."/>
            <person name="Hameed A."/>
            <person name="Lodhi M."/>
            <person name="Johnson A."/>
            <person name="Chen E."/>
            <person name="Marra M.A."/>
            <person name="Martienssen R."/>
            <person name="McCombie W.R."/>
        </authorList>
    </citation>
    <scope>NUCLEOTIDE SEQUENCE [LARGE SCALE GENOMIC DNA]</scope>
    <source>
        <strain>cv. Columbia</strain>
    </source>
</reference>
<reference key="2">
    <citation type="journal article" date="2017" name="Plant J.">
        <title>Araport11: a complete reannotation of the Arabidopsis thaliana reference genome.</title>
        <authorList>
            <person name="Cheng C.Y."/>
            <person name="Krishnakumar V."/>
            <person name="Chan A.P."/>
            <person name="Thibaud-Nissen F."/>
            <person name="Schobel S."/>
            <person name="Town C.D."/>
        </authorList>
    </citation>
    <scope>GENOME REANNOTATION</scope>
    <source>
        <strain>cv. Columbia</strain>
    </source>
</reference>
<reference key="3">
    <citation type="journal article" date="2002" name="Science">
        <title>Functional annotation of a full-length Arabidopsis cDNA collection.</title>
        <authorList>
            <person name="Seki M."/>
            <person name="Narusaka M."/>
            <person name="Kamiya A."/>
            <person name="Ishida J."/>
            <person name="Satou M."/>
            <person name="Sakurai T."/>
            <person name="Nakajima M."/>
            <person name="Enju A."/>
            <person name="Akiyama K."/>
            <person name="Oono Y."/>
            <person name="Muramatsu M."/>
            <person name="Hayashizaki Y."/>
            <person name="Kawai J."/>
            <person name="Carninci P."/>
            <person name="Itoh M."/>
            <person name="Ishii Y."/>
            <person name="Arakawa T."/>
            <person name="Shibata K."/>
            <person name="Shinagawa A."/>
            <person name="Shinozaki K."/>
        </authorList>
    </citation>
    <scope>NUCLEOTIDE SEQUENCE [LARGE SCALE MRNA]</scope>
    <source>
        <strain>cv. Columbia</strain>
    </source>
</reference>
<reference key="4">
    <citation type="journal article" date="2003" name="Science">
        <title>Empirical analysis of transcriptional activity in the Arabidopsis genome.</title>
        <authorList>
            <person name="Yamada K."/>
            <person name="Lim J."/>
            <person name="Dale J.M."/>
            <person name="Chen H."/>
            <person name="Shinn P."/>
            <person name="Palm C.J."/>
            <person name="Southwick A.M."/>
            <person name="Wu H.C."/>
            <person name="Kim C.J."/>
            <person name="Nguyen M."/>
            <person name="Pham P.K."/>
            <person name="Cheuk R.F."/>
            <person name="Karlin-Newmann G."/>
            <person name="Liu S.X."/>
            <person name="Lam B."/>
            <person name="Sakano H."/>
            <person name="Wu T."/>
            <person name="Yu G."/>
            <person name="Miranda M."/>
            <person name="Quach H.L."/>
            <person name="Tripp M."/>
            <person name="Chang C.H."/>
            <person name="Lee J.M."/>
            <person name="Toriumi M.J."/>
            <person name="Chan M.M."/>
            <person name="Tang C.C."/>
            <person name="Onodera C.S."/>
            <person name="Deng J.M."/>
            <person name="Akiyama K."/>
            <person name="Ansari Y."/>
            <person name="Arakawa T."/>
            <person name="Banh J."/>
            <person name="Banno F."/>
            <person name="Bowser L."/>
            <person name="Brooks S.Y."/>
            <person name="Carninci P."/>
            <person name="Chao Q."/>
            <person name="Choy N."/>
            <person name="Enju A."/>
            <person name="Goldsmith A.D."/>
            <person name="Gurjal M."/>
            <person name="Hansen N.F."/>
            <person name="Hayashizaki Y."/>
            <person name="Johnson-Hopson C."/>
            <person name="Hsuan V.W."/>
            <person name="Iida K."/>
            <person name="Karnes M."/>
            <person name="Khan S."/>
            <person name="Koesema E."/>
            <person name="Ishida J."/>
            <person name="Jiang P.X."/>
            <person name="Jones T."/>
            <person name="Kawai J."/>
            <person name="Kamiya A."/>
            <person name="Meyers C."/>
            <person name="Nakajima M."/>
            <person name="Narusaka M."/>
            <person name="Seki M."/>
            <person name="Sakurai T."/>
            <person name="Satou M."/>
            <person name="Tamse R."/>
            <person name="Vaysberg M."/>
            <person name="Wallender E.K."/>
            <person name="Wong C."/>
            <person name="Yamamura Y."/>
            <person name="Yuan S."/>
            <person name="Shinozaki K."/>
            <person name="Davis R.W."/>
            <person name="Theologis A."/>
            <person name="Ecker J.R."/>
        </authorList>
    </citation>
    <scope>NUCLEOTIDE SEQUENCE [LARGE SCALE MRNA]</scope>
    <source>
        <strain>cv. Columbia</strain>
    </source>
</reference>
<reference key="5">
    <citation type="submission" date="2004-09" db="EMBL/GenBank/DDBJ databases">
        <title>Large-scale analysis of RIKEN Arabidopsis full-length (RAFL) cDNAs.</title>
        <authorList>
            <person name="Totoki Y."/>
            <person name="Seki M."/>
            <person name="Ishida J."/>
            <person name="Nakajima M."/>
            <person name="Enju A."/>
            <person name="Kamiya A."/>
            <person name="Narusaka M."/>
            <person name="Shin-i T."/>
            <person name="Nakagawa M."/>
            <person name="Sakamoto N."/>
            <person name="Oishi K."/>
            <person name="Kohara Y."/>
            <person name="Kobayashi M."/>
            <person name="Toyoda A."/>
            <person name="Sakaki Y."/>
            <person name="Sakurai T."/>
            <person name="Iida K."/>
            <person name="Akiyama K."/>
            <person name="Satou M."/>
            <person name="Toyoda T."/>
            <person name="Konagaya A."/>
            <person name="Carninci P."/>
            <person name="Kawai J."/>
            <person name="Hayashizaki Y."/>
            <person name="Shinozaki K."/>
        </authorList>
    </citation>
    <scope>NUCLEOTIDE SEQUENCE [LARGE SCALE MRNA]</scope>
    <source>
        <strain>cv. Columbia</strain>
    </source>
</reference>
<reference key="6">
    <citation type="submission" date="2002-03" db="EMBL/GenBank/DDBJ databases">
        <title>Full-length cDNA from Arabidopsis thaliana.</title>
        <authorList>
            <person name="Brover V.V."/>
            <person name="Troukhan M.E."/>
            <person name="Alexandrov N.A."/>
            <person name="Lu Y.-P."/>
            <person name="Flavell R.B."/>
            <person name="Feldmann K.A."/>
        </authorList>
    </citation>
    <scope>NUCLEOTIDE SEQUENCE [LARGE SCALE MRNA]</scope>
</reference>
<comment type="subcellular location">
    <subcellularLocation>
        <location evidence="1">Membrane</location>
        <topology evidence="3">Multi-pass membrane protein</topology>
    </subcellularLocation>
</comment>
<comment type="similarity">
    <text evidence="3">Belongs to the drug/metabolite transporter (DMT) superfamily. Plant drug/metabolite exporter (P-DME) (TC 2.A.7.4) family.</text>
</comment>
<comment type="sequence caution" evidence="3">
    <conflict type="erroneous initiation">
        <sequence resource="EMBL-CDS" id="AAM65094"/>
    </conflict>
    <text>Truncated N-terminus.</text>
</comment>
<sequence length="398" mass="42876">MTAPMILTGSGSAAERDARMAHTAMAFVQLFNGGYHVITKVALNVGVNQLVFCVCRDLLALSILAPLAYFRERKIRTPMNKSLLLSFFFLGLAGVFGNQLLFLIGLTYTNPTYAAAIQPSIPVFTFLLAVMMGTERVNLLRIEGQTKVGGTLVCVMGAVFMVVFRGPALLGDKDADFAMNNEISAKGQPEPTGWLVSGFLDLGFEQWHIGVLCLIGNCMCMATFLAIQAPLLKKYPANLSVAALSYFFGTVLMCTTAFFMVKEPLDWKLTQSEVLAVIYAGVIASALNYGLLTWSNKIIGPALVALYNPLQPAASAFLSRIFLGSPIYLGSVVGGFFIILGLYMVTWASFRERKTAVSGIGIAPHGLKTSEPLIFNGTVNRLGQLFSGLPSSSVKSAD</sequence>
<dbReference type="EMBL" id="AL021687">
    <property type="status" value="NOT_ANNOTATED_CDS"/>
    <property type="molecule type" value="Genomic_DNA"/>
</dbReference>
<dbReference type="EMBL" id="CP002687">
    <property type="protein sequence ID" value="AEE84156.1"/>
    <property type="molecule type" value="Genomic_DNA"/>
</dbReference>
<dbReference type="EMBL" id="AK117436">
    <property type="protein sequence ID" value="BAC42101.1"/>
    <property type="molecule type" value="mRNA"/>
</dbReference>
<dbReference type="EMBL" id="AY060572">
    <property type="protein sequence ID" value="AAL31201.1"/>
    <property type="molecule type" value="mRNA"/>
</dbReference>
<dbReference type="EMBL" id="AY149946">
    <property type="protein sequence ID" value="AAN31100.1"/>
    <property type="molecule type" value="mRNA"/>
</dbReference>
<dbReference type="EMBL" id="AK175465">
    <property type="protein sequence ID" value="BAD43228.1"/>
    <property type="molecule type" value="mRNA"/>
</dbReference>
<dbReference type="EMBL" id="AY087552">
    <property type="protein sequence ID" value="AAM65094.1"/>
    <property type="status" value="ALT_INIT"/>
    <property type="molecule type" value="mRNA"/>
</dbReference>
<dbReference type="SMR" id="Q8W4R9"/>
<dbReference type="FunCoup" id="Q8W4R9">
    <property type="interactions" value="322"/>
</dbReference>
<dbReference type="iPTMnet" id="Q8W4R9"/>
<dbReference type="PaxDb" id="3702-AT4G19185.1"/>
<dbReference type="ProteomicsDB" id="242400"/>
<dbReference type="EnsemblPlants" id="AT4G19185.1">
    <property type="protein sequence ID" value="AT4G19185.1"/>
    <property type="gene ID" value="AT4G19185"/>
</dbReference>
<dbReference type="Gramene" id="AT4G19185.1">
    <property type="protein sequence ID" value="AT4G19185.1"/>
    <property type="gene ID" value="AT4G19185"/>
</dbReference>
<dbReference type="KEGG" id="ath:AT4G19185"/>
<dbReference type="Araport" id="AT4G19185"/>
<dbReference type="TAIR" id="AT4G19185">
    <property type="gene designation" value="UMAMIT2"/>
</dbReference>
<dbReference type="eggNOG" id="ENOG502QUHA">
    <property type="taxonomic scope" value="Eukaryota"/>
</dbReference>
<dbReference type="HOGENOM" id="CLU_025359_1_2_1"/>
<dbReference type="InParanoid" id="Q8W4R9"/>
<dbReference type="OMA" id="MNHEINA"/>
<dbReference type="PhylomeDB" id="Q8W4R9"/>
<dbReference type="PRO" id="PR:Q8W4R9"/>
<dbReference type="Proteomes" id="UP000006548">
    <property type="component" value="Chromosome 4"/>
</dbReference>
<dbReference type="ExpressionAtlas" id="Q8W4R9">
    <property type="expression patterns" value="baseline and differential"/>
</dbReference>
<dbReference type="GO" id="GO:0005794">
    <property type="term" value="C:Golgi apparatus"/>
    <property type="evidence" value="ECO:0007005"/>
    <property type="project" value="TAIR"/>
</dbReference>
<dbReference type="GO" id="GO:0016020">
    <property type="term" value="C:membrane"/>
    <property type="evidence" value="ECO:0007669"/>
    <property type="project" value="UniProtKB-SubCell"/>
</dbReference>
<dbReference type="GO" id="GO:0022857">
    <property type="term" value="F:transmembrane transporter activity"/>
    <property type="evidence" value="ECO:0007669"/>
    <property type="project" value="InterPro"/>
</dbReference>
<dbReference type="InterPro" id="IPR000620">
    <property type="entry name" value="EamA_dom"/>
</dbReference>
<dbReference type="InterPro" id="IPR030184">
    <property type="entry name" value="WAT1-related"/>
</dbReference>
<dbReference type="PANTHER" id="PTHR31218">
    <property type="entry name" value="WAT1-RELATED PROTEIN"/>
    <property type="match status" value="1"/>
</dbReference>
<dbReference type="Pfam" id="PF00892">
    <property type="entry name" value="EamA"/>
    <property type="match status" value="2"/>
</dbReference>
<dbReference type="SUPFAM" id="SSF103481">
    <property type="entry name" value="Multidrug resistance efflux transporter EmrE"/>
    <property type="match status" value="2"/>
</dbReference>
<feature type="chain" id="PRO_0000421342" description="WAT1-related protein At4g19185">
    <location>
        <begin position="1"/>
        <end position="398"/>
    </location>
</feature>
<feature type="transmembrane region" description="Helical" evidence="2">
    <location>
        <begin position="27"/>
        <end position="47"/>
    </location>
</feature>
<feature type="transmembrane region" description="Helical" evidence="2">
    <location>
        <begin position="50"/>
        <end position="70"/>
    </location>
</feature>
<feature type="transmembrane region" description="Helical" evidence="2">
    <location>
        <begin position="84"/>
        <end position="104"/>
    </location>
</feature>
<feature type="transmembrane region" description="Helical" evidence="2">
    <location>
        <begin position="113"/>
        <end position="133"/>
    </location>
</feature>
<feature type="transmembrane region" description="Helical" evidence="2">
    <location>
        <begin position="150"/>
        <end position="170"/>
    </location>
</feature>
<feature type="transmembrane region" description="Helical" evidence="2">
    <location>
        <begin position="207"/>
        <end position="227"/>
    </location>
</feature>
<feature type="transmembrane region" description="Helical" evidence="2">
    <location>
        <begin position="241"/>
        <end position="261"/>
    </location>
</feature>
<feature type="transmembrane region" description="Helical" evidence="2">
    <location>
        <begin position="274"/>
        <end position="294"/>
    </location>
</feature>
<feature type="transmembrane region" description="Helical" evidence="2">
    <location>
        <begin position="298"/>
        <end position="318"/>
    </location>
</feature>
<feature type="transmembrane region" description="Helical" evidence="2">
    <location>
        <begin position="321"/>
        <end position="341"/>
    </location>
</feature>
<feature type="domain" description="EamA 1">
    <location>
        <begin position="32"/>
        <end position="144"/>
    </location>
</feature>
<feature type="domain" description="EamA 2">
    <location>
        <begin position="237"/>
        <end position="346"/>
    </location>
</feature>
<protein>
    <recommendedName>
        <fullName>WAT1-related protein At4g19185</fullName>
    </recommendedName>
</protein>
<proteinExistence type="evidence at transcript level"/>
<accession>Q8W4R9</accession>
<accession>Q8LAX2</accession>
<evidence type="ECO:0000250" key="1"/>
<evidence type="ECO:0000255" key="2"/>
<evidence type="ECO:0000305" key="3"/>
<keyword id="KW-0472">Membrane</keyword>
<keyword id="KW-1185">Reference proteome</keyword>
<keyword id="KW-0677">Repeat</keyword>
<keyword id="KW-0812">Transmembrane</keyword>
<keyword id="KW-1133">Transmembrane helix</keyword>
<gene>
    <name type="ordered locus">At4g19185</name>
    <name type="ORF">T18B16.150</name>
</gene>